<organism>
    <name type="scientific">Desulforudis audaxviator (strain MP104C)</name>
    <dbReference type="NCBI Taxonomy" id="477974"/>
    <lineage>
        <taxon>Bacteria</taxon>
        <taxon>Bacillati</taxon>
        <taxon>Bacillota</taxon>
        <taxon>Clostridia</taxon>
        <taxon>Thermoanaerobacterales</taxon>
        <taxon>Candidatus Desulforudaceae</taxon>
        <taxon>Candidatus Desulforudis</taxon>
    </lineage>
</organism>
<sequence>MKRDRGRRKKKICSFCVDKIAVIDYKDTPRLKKYITERGKILPRRITGNCAHHQRMLTVSIKRSRHMALLPFSTD</sequence>
<accession>B1I6S9</accession>
<feature type="chain" id="PRO_0000345459" description="Small ribosomal subunit protein bS18">
    <location>
        <begin position="1"/>
        <end position="75"/>
    </location>
</feature>
<keyword id="KW-1185">Reference proteome</keyword>
<keyword id="KW-0687">Ribonucleoprotein</keyword>
<keyword id="KW-0689">Ribosomal protein</keyword>
<keyword id="KW-0694">RNA-binding</keyword>
<keyword id="KW-0699">rRNA-binding</keyword>
<comment type="function">
    <text evidence="1">Binds as a heterodimer with protein bS6 to the central domain of the 16S rRNA, where it helps stabilize the platform of the 30S subunit.</text>
</comment>
<comment type="subunit">
    <text evidence="1">Part of the 30S ribosomal subunit. Forms a tight heterodimer with protein bS6.</text>
</comment>
<comment type="similarity">
    <text evidence="1">Belongs to the bacterial ribosomal protein bS18 family.</text>
</comment>
<proteinExistence type="inferred from homology"/>
<evidence type="ECO:0000255" key="1">
    <source>
        <dbReference type="HAMAP-Rule" id="MF_00270"/>
    </source>
</evidence>
<evidence type="ECO:0000305" key="2"/>
<name>RS18_DESAP</name>
<protein>
    <recommendedName>
        <fullName evidence="1">Small ribosomal subunit protein bS18</fullName>
    </recommendedName>
    <alternativeName>
        <fullName evidence="2">30S ribosomal protein S18</fullName>
    </alternativeName>
</protein>
<gene>
    <name evidence="1" type="primary">rpsR</name>
    <name type="ordered locus">Daud_2214</name>
</gene>
<reference key="1">
    <citation type="submission" date="2007-10" db="EMBL/GenBank/DDBJ databases">
        <title>Complete sequence of chromosome of Desulforudis audaxviator MP104C.</title>
        <authorList>
            <person name="Copeland A."/>
            <person name="Lucas S."/>
            <person name="Lapidus A."/>
            <person name="Barry K."/>
            <person name="Glavina del Rio T."/>
            <person name="Dalin E."/>
            <person name="Tice H."/>
            <person name="Bruce D."/>
            <person name="Pitluck S."/>
            <person name="Lowry S.R."/>
            <person name="Larimer F."/>
            <person name="Land M.L."/>
            <person name="Hauser L."/>
            <person name="Kyrpides N."/>
            <person name="Ivanova N.N."/>
            <person name="Richardson P."/>
        </authorList>
    </citation>
    <scope>NUCLEOTIDE SEQUENCE [LARGE SCALE GENOMIC DNA]</scope>
    <source>
        <strain>MP104C</strain>
    </source>
</reference>
<dbReference type="EMBL" id="CP000860">
    <property type="protein sequence ID" value="ACA60701.1"/>
    <property type="molecule type" value="Genomic_DNA"/>
</dbReference>
<dbReference type="RefSeq" id="WP_012303275.1">
    <property type="nucleotide sequence ID" value="NC_010424.1"/>
</dbReference>
<dbReference type="SMR" id="B1I6S9"/>
<dbReference type="STRING" id="477974.Daud_2214"/>
<dbReference type="KEGG" id="dau:Daud_2214"/>
<dbReference type="eggNOG" id="COG0238">
    <property type="taxonomic scope" value="Bacteria"/>
</dbReference>
<dbReference type="HOGENOM" id="CLU_148710_2_2_9"/>
<dbReference type="OrthoDB" id="9812008at2"/>
<dbReference type="Proteomes" id="UP000008544">
    <property type="component" value="Chromosome"/>
</dbReference>
<dbReference type="GO" id="GO:0022627">
    <property type="term" value="C:cytosolic small ribosomal subunit"/>
    <property type="evidence" value="ECO:0007669"/>
    <property type="project" value="TreeGrafter"/>
</dbReference>
<dbReference type="GO" id="GO:0070181">
    <property type="term" value="F:small ribosomal subunit rRNA binding"/>
    <property type="evidence" value="ECO:0007669"/>
    <property type="project" value="TreeGrafter"/>
</dbReference>
<dbReference type="GO" id="GO:0003735">
    <property type="term" value="F:structural constituent of ribosome"/>
    <property type="evidence" value="ECO:0007669"/>
    <property type="project" value="InterPro"/>
</dbReference>
<dbReference type="GO" id="GO:0006412">
    <property type="term" value="P:translation"/>
    <property type="evidence" value="ECO:0007669"/>
    <property type="project" value="UniProtKB-UniRule"/>
</dbReference>
<dbReference type="FunFam" id="4.10.640.10:FF:000004">
    <property type="entry name" value="30S ribosomal protein S18"/>
    <property type="match status" value="1"/>
</dbReference>
<dbReference type="Gene3D" id="4.10.640.10">
    <property type="entry name" value="Ribosomal protein S18"/>
    <property type="match status" value="1"/>
</dbReference>
<dbReference type="HAMAP" id="MF_00270">
    <property type="entry name" value="Ribosomal_bS18"/>
    <property type="match status" value="1"/>
</dbReference>
<dbReference type="InterPro" id="IPR001648">
    <property type="entry name" value="Ribosomal_bS18"/>
</dbReference>
<dbReference type="InterPro" id="IPR018275">
    <property type="entry name" value="Ribosomal_bS18_CS"/>
</dbReference>
<dbReference type="InterPro" id="IPR036870">
    <property type="entry name" value="Ribosomal_bS18_sf"/>
</dbReference>
<dbReference type="NCBIfam" id="TIGR00165">
    <property type="entry name" value="S18"/>
    <property type="match status" value="1"/>
</dbReference>
<dbReference type="PANTHER" id="PTHR13479">
    <property type="entry name" value="30S RIBOSOMAL PROTEIN S18"/>
    <property type="match status" value="1"/>
</dbReference>
<dbReference type="PANTHER" id="PTHR13479:SF40">
    <property type="entry name" value="SMALL RIBOSOMAL SUBUNIT PROTEIN BS18M"/>
    <property type="match status" value="1"/>
</dbReference>
<dbReference type="Pfam" id="PF01084">
    <property type="entry name" value="Ribosomal_S18"/>
    <property type="match status" value="1"/>
</dbReference>
<dbReference type="PRINTS" id="PR00974">
    <property type="entry name" value="RIBOSOMALS18"/>
</dbReference>
<dbReference type="SUPFAM" id="SSF46911">
    <property type="entry name" value="Ribosomal protein S18"/>
    <property type="match status" value="1"/>
</dbReference>
<dbReference type="PROSITE" id="PS00057">
    <property type="entry name" value="RIBOSOMAL_S18"/>
    <property type="match status" value="1"/>
</dbReference>